<evidence type="ECO:0000255" key="1">
    <source>
        <dbReference type="HAMAP-Rule" id="MF_00532"/>
    </source>
</evidence>
<evidence type="ECO:0000305" key="2"/>
<reference key="1">
    <citation type="journal article" date="2010" name="Stand. Genomic Sci.">
        <title>Complete genome sequence of Rhizobium leguminosarum bv trifolii strain WSM2304, an effective microsymbiont of the South American clover Trifolium polymorphum.</title>
        <authorList>
            <person name="Reeve W."/>
            <person name="O'Hara G."/>
            <person name="Chain P."/>
            <person name="Ardley J."/>
            <person name="Brau L."/>
            <person name="Nandesena K."/>
            <person name="Tiwari R."/>
            <person name="Malfatti S."/>
            <person name="Kiss H."/>
            <person name="Lapidus A."/>
            <person name="Copeland A."/>
            <person name="Nolan M."/>
            <person name="Land M."/>
            <person name="Ivanova N."/>
            <person name="Mavromatis K."/>
            <person name="Markowitz V."/>
            <person name="Kyrpides N."/>
            <person name="Melino V."/>
            <person name="Denton M."/>
            <person name="Yates R."/>
            <person name="Howieson J."/>
        </authorList>
    </citation>
    <scope>NUCLEOTIDE SEQUENCE [LARGE SCALE GENOMIC DNA]</scope>
    <source>
        <strain>WSM2304</strain>
    </source>
</reference>
<gene>
    <name evidence="1" type="primary">rpsI</name>
    <name type="ordered locus">Rleg2_1234</name>
</gene>
<accession>B5ZXZ5</accession>
<comment type="similarity">
    <text evidence="1">Belongs to the universal ribosomal protein uS9 family.</text>
</comment>
<feature type="chain" id="PRO_1000128160" description="Small ribosomal subunit protein uS9">
    <location>
        <begin position="1"/>
        <end position="155"/>
    </location>
</feature>
<organism>
    <name type="scientific">Rhizobium leguminosarum bv. trifolii (strain WSM2304)</name>
    <dbReference type="NCBI Taxonomy" id="395492"/>
    <lineage>
        <taxon>Bacteria</taxon>
        <taxon>Pseudomonadati</taxon>
        <taxon>Pseudomonadota</taxon>
        <taxon>Alphaproteobacteria</taxon>
        <taxon>Hyphomicrobiales</taxon>
        <taxon>Rhizobiaceae</taxon>
        <taxon>Rhizobium/Agrobacterium group</taxon>
        <taxon>Rhizobium</taxon>
    </lineage>
</organism>
<sequence length="155" mass="16718">MADLSSLKDLGTATEAAAPAHVRKVDSLGRSYATGKRKNAVARVWVKPGSGKIIVNGKEFAEYFARPVLQMILRQPIVAAARDGQFDIVATVAGGGLSGQAGAVRHGLSKALTYFEPGLRSVLKKGGFLTRDSRVVERKKYGKAKARRSFQFSKR</sequence>
<protein>
    <recommendedName>
        <fullName evidence="1">Small ribosomal subunit protein uS9</fullName>
    </recommendedName>
    <alternativeName>
        <fullName evidence="2">30S ribosomal protein S9</fullName>
    </alternativeName>
</protein>
<name>RS9_RHILW</name>
<dbReference type="EMBL" id="CP001191">
    <property type="protein sequence ID" value="ACI54528.1"/>
    <property type="molecule type" value="Genomic_DNA"/>
</dbReference>
<dbReference type="RefSeq" id="WP_003587370.1">
    <property type="nucleotide sequence ID" value="NC_011369.1"/>
</dbReference>
<dbReference type="SMR" id="B5ZXZ5"/>
<dbReference type="STRING" id="395492.Rleg2_1234"/>
<dbReference type="KEGG" id="rlt:Rleg2_1234"/>
<dbReference type="eggNOG" id="COG0103">
    <property type="taxonomic scope" value="Bacteria"/>
</dbReference>
<dbReference type="HOGENOM" id="CLU_046483_2_0_5"/>
<dbReference type="Proteomes" id="UP000008330">
    <property type="component" value="Chromosome"/>
</dbReference>
<dbReference type="GO" id="GO:0022627">
    <property type="term" value="C:cytosolic small ribosomal subunit"/>
    <property type="evidence" value="ECO:0007669"/>
    <property type="project" value="TreeGrafter"/>
</dbReference>
<dbReference type="GO" id="GO:0003723">
    <property type="term" value="F:RNA binding"/>
    <property type="evidence" value="ECO:0007669"/>
    <property type="project" value="TreeGrafter"/>
</dbReference>
<dbReference type="GO" id="GO:0003735">
    <property type="term" value="F:structural constituent of ribosome"/>
    <property type="evidence" value="ECO:0007669"/>
    <property type="project" value="InterPro"/>
</dbReference>
<dbReference type="GO" id="GO:0006412">
    <property type="term" value="P:translation"/>
    <property type="evidence" value="ECO:0007669"/>
    <property type="project" value="UniProtKB-UniRule"/>
</dbReference>
<dbReference type="FunFam" id="3.30.230.10:FF:000001">
    <property type="entry name" value="30S ribosomal protein S9"/>
    <property type="match status" value="1"/>
</dbReference>
<dbReference type="Gene3D" id="3.30.230.10">
    <property type="match status" value="1"/>
</dbReference>
<dbReference type="HAMAP" id="MF_00532_B">
    <property type="entry name" value="Ribosomal_uS9_B"/>
    <property type="match status" value="1"/>
</dbReference>
<dbReference type="InterPro" id="IPR020568">
    <property type="entry name" value="Ribosomal_Su5_D2-typ_SF"/>
</dbReference>
<dbReference type="InterPro" id="IPR000754">
    <property type="entry name" value="Ribosomal_uS9"/>
</dbReference>
<dbReference type="InterPro" id="IPR023035">
    <property type="entry name" value="Ribosomal_uS9_bac/plastid"/>
</dbReference>
<dbReference type="InterPro" id="IPR020574">
    <property type="entry name" value="Ribosomal_uS9_CS"/>
</dbReference>
<dbReference type="InterPro" id="IPR014721">
    <property type="entry name" value="Ribsml_uS5_D2-typ_fold_subgr"/>
</dbReference>
<dbReference type="NCBIfam" id="NF001099">
    <property type="entry name" value="PRK00132.1"/>
    <property type="match status" value="1"/>
</dbReference>
<dbReference type="PANTHER" id="PTHR21569">
    <property type="entry name" value="RIBOSOMAL PROTEIN S9"/>
    <property type="match status" value="1"/>
</dbReference>
<dbReference type="PANTHER" id="PTHR21569:SF1">
    <property type="entry name" value="SMALL RIBOSOMAL SUBUNIT PROTEIN US9M"/>
    <property type="match status" value="1"/>
</dbReference>
<dbReference type="Pfam" id="PF00380">
    <property type="entry name" value="Ribosomal_S9"/>
    <property type="match status" value="1"/>
</dbReference>
<dbReference type="SUPFAM" id="SSF54211">
    <property type="entry name" value="Ribosomal protein S5 domain 2-like"/>
    <property type="match status" value="1"/>
</dbReference>
<dbReference type="PROSITE" id="PS00360">
    <property type="entry name" value="RIBOSOMAL_S9"/>
    <property type="match status" value="1"/>
</dbReference>
<proteinExistence type="inferred from homology"/>
<keyword id="KW-1185">Reference proteome</keyword>
<keyword id="KW-0687">Ribonucleoprotein</keyword>
<keyword id="KW-0689">Ribosomal protein</keyword>